<dbReference type="EMBL" id="AAFI02000049">
    <property type="protein sequence ID" value="EAL65961.1"/>
    <property type="molecule type" value="Genomic_DNA"/>
</dbReference>
<dbReference type="RefSeq" id="XP_639330.1">
    <property type="nucleotide sequence ID" value="XM_634238.1"/>
</dbReference>
<dbReference type="SMR" id="Q54RM1"/>
<dbReference type="FunCoup" id="Q54RM1">
    <property type="interactions" value="1"/>
</dbReference>
<dbReference type="STRING" id="44689.Q54RM1"/>
<dbReference type="PaxDb" id="44689-DDB0237797"/>
<dbReference type="EnsemblProtists" id="EAL65961">
    <property type="protein sequence ID" value="EAL65961"/>
    <property type="gene ID" value="DDB_G0283035"/>
</dbReference>
<dbReference type="GeneID" id="8623901"/>
<dbReference type="KEGG" id="ddi:DDB_G0283035"/>
<dbReference type="dictyBase" id="DDB_G0283035">
    <property type="gene designation" value="osbG"/>
</dbReference>
<dbReference type="VEuPathDB" id="AmoebaDB:DDB_G0283035"/>
<dbReference type="eggNOG" id="KOG2210">
    <property type="taxonomic scope" value="Eukaryota"/>
</dbReference>
<dbReference type="HOGENOM" id="CLU_651223_0_0_1"/>
<dbReference type="InParanoid" id="Q54RM1"/>
<dbReference type="OMA" id="FSAKFHM"/>
<dbReference type="PhylomeDB" id="Q54RM1"/>
<dbReference type="Reactome" id="R-DDI-1482801">
    <property type="pathway name" value="Acyl chain remodelling of PS"/>
</dbReference>
<dbReference type="Reactome" id="R-DDI-9013407">
    <property type="pathway name" value="RHOH GTPase cycle"/>
</dbReference>
<dbReference type="PRO" id="PR:Q54RM1"/>
<dbReference type="Proteomes" id="UP000002195">
    <property type="component" value="Chromosome 4"/>
</dbReference>
<dbReference type="GO" id="GO:0005829">
    <property type="term" value="C:cytosol"/>
    <property type="evidence" value="ECO:0000314"/>
    <property type="project" value="dictyBase"/>
</dbReference>
<dbReference type="GO" id="GO:0016020">
    <property type="term" value="C:membrane"/>
    <property type="evidence" value="ECO:0000318"/>
    <property type="project" value="GO_Central"/>
</dbReference>
<dbReference type="GO" id="GO:0005634">
    <property type="term" value="C:nucleus"/>
    <property type="evidence" value="ECO:0000314"/>
    <property type="project" value="dictyBase"/>
</dbReference>
<dbReference type="GO" id="GO:0032934">
    <property type="term" value="F:sterol binding"/>
    <property type="evidence" value="ECO:0000318"/>
    <property type="project" value="GO_Central"/>
</dbReference>
<dbReference type="FunFam" id="3.30.70.3490:FF:000042">
    <property type="match status" value="1"/>
</dbReference>
<dbReference type="Gene3D" id="2.40.160.120">
    <property type="match status" value="1"/>
</dbReference>
<dbReference type="Gene3D" id="3.30.70.3490">
    <property type="match status" value="1"/>
</dbReference>
<dbReference type="InterPro" id="IPR037239">
    <property type="entry name" value="OSBP_sf"/>
</dbReference>
<dbReference type="InterPro" id="IPR000648">
    <property type="entry name" value="Oxysterol-bd"/>
</dbReference>
<dbReference type="PANTHER" id="PTHR10972:SF152">
    <property type="entry name" value="OXYSTEROL-BINDING PROTEIN 7"/>
    <property type="match status" value="1"/>
</dbReference>
<dbReference type="PANTHER" id="PTHR10972">
    <property type="entry name" value="OXYSTEROL-BINDING PROTEIN-RELATED"/>
    <property type="match status" value="1"/>
</dbReference>
<dbReference type="Pfam" id="PF01237">
    <property type="entry name" value="Oxysterol_BP"/>
    <property type="match status" value="1"/>
</dbReference>
<dbReference type="SUPFAM" id="SSF144000">
    <property type="entry name" value="Oxysterol-binding protein-like"/>
    <property type="match status" value="1"/>
</dbReference>
<feature type="chain" id="PRO_0000328477" description="Oxysterol-binding protein 7">
    <location>
        <begin position="1"/>
        <end position="422"/>
    </location>
</feature>
<feature type="region of interest" description="Disordered" evidence="2">
    <location>
        <begin position="283"/>
        <end position="313"/>
    </location>
</feature>
<feature type="region of interest" description="Disordered" evidence="2">
    <location>
        <begin position="402"/>
        <end position="422"/>
    </location>
</feature>
<feature type="coiled-coil region" evidence="1">
    <location>
        <begin position="354"/>
        <end position="384"/>
    </location>
</feature>
<feature type="compositionally biased region" description="Basic residues" evidence="2">
    <location>
        <begin position="293"/>
        <end position="307"/>
    </location>
</feature>
<feature type="compositionally biased region" description="Low complexity" evidence="2">
    <location>
        <begin position="407"/>
        <end position="422"/>
    </location>
</feature>
<proteinExistence type="inferred from homology"/>
<name>OSB7_DICDI</name>
<accession>Q54RM1</accession>
<reference key="1">
    <citation type="journal article" date="2005" name="Nature">
        <title>The genome of the social amoeba Dictyostelium discoideum.</title>
        <authorList>
            <person name="Eichinger L."/>
            <person name="Pachebat J.A."/>
            <person name="Gloeckner G."/>
            <person name="Rajandream M.A."/>
            <person name="Sucgang R."/>
            <person name="Berriman M."/>
            <person name="Song J."/>
            <person name="Olsen R."/>
            <person name="Szafranski K."/>
            <person name="Xu Q."/>
            <person name="Tunggal B."/>
            <person name="Kummerfeld S."/>
            <person name="Madera M."/>
            <person name="Konfortov B.A."/>
            <person name="Rivero F."/>
            <person name="Bankier A.T."/>
            <person name="Lehmann R."/>
            <person name="Hamlin N."/>
            <person name="Davies R."/>
            <person name="Gaudet P."/>
            <person name="Fey P."/>
            <person name="Pilcher K."/>
            <person name="Chen G."/>
            <person name="Saunders D."/>
            <person name="Sodergren E.J."/>
            <person name="Davis P."/>
            <person name="Kerhornou A."/>
            <person name="Nie X."/>
            <person name="Hall N."/>
            <person name="Anjard C."/>
            <person name="Hemphill L."/>
            <person name="Bason N."/>
            <person name="Farbrother P."/>
            <person name="Desany B."/>
            <person name="Just E."/>
            <person name="Morio T."/>
            <person name="Rost R."/>
            <person name="Churcher C.M."/>
            <person name="Cooper J."/>
            <person name="Haydock S."/>
            <person name="van Driessche N."/>
            <person name="Cronin A."/>
            <person name="Goodhead I."/>
            <person name="Muzny D.M."/>
            <person name="Mourier T."/>
            <person name="Pain A."/>
            <person name="Lu M."/>
            <person name="Harper D."/>
            <person name="Lindsay R."/>
            <person name="Hauser H."/>
            <person name="James K.D."/>
            <person name="Quiles M."/>
            <person name="Madan Babu M."/>
            <person name="Saito T."/>
            <person name="Buchrieser C."/>
            <person name="Wardroper A."/>
            <person name="Felder M."/>
            <person name="Thangavelu M."/>
            <person name="Johnson D."/>
            <person name="Knights A."/>
            <person name="Loulseged H."/>
            <person name="Mungall K.L."/>
            <person name="Oliver K."/>
            <person name="Price C."/>
            <person name="Quail M.A."/>
            <person name="Urushihara H."/>
            <person name="Hernandez J."/>
            <person name="Rabbinowitsch E."/>
            <person name="Steffen D."/>
            <person name="Sanders M."/>
            <person name="Ma J."/>
            <person name="Kohara Y."/>
            <person name="Sharp S."/>
            <person name="Simmonds M.N."/>
            <person name="Spiegler S."/>
            <person name="Tivey A."/>
            <person name="Sugano S."/>
            <person name="White B."/>
            <person name="Walker D."/>
            <person name="Woodward J.R."/>
            <person name="Winckler T."/>
            <person name="Tanaka Y."/>
            <person name="Shaulsky G."/>
            <person name="Schleicher M."/>
            <person name="Weinstock G.M."/>
            <person name="Rosenthal A."/>
            <person name="Cox E.C."/>
            <person name="Chisholm R.L."/>
            <person name="Gibbs R.A."/>
            <person name="Loomis W.F."/>
            <person name="Platzer M."/>
            <person name="Kay R.R."/>
            <person name="Williams J.G."/>
            <person name="Dear P.H."/>
            <person name="Noegel A.A."/>
            <person name="Barrell B.G."/>
            <person name="Kuspa A."/>
        </authorList>
    </citation>
    <scope>NUCLEOTIDE SEQUENCE [LARGE SCALE GENOMIC DNA]</scope>
    <source>
        <strain>AX4</strain>
    </source>
</reference>
<keyword id="KW-0175">Coiled coil</keyword>
<keyword id="KW-1185">Reference proteome</keyword>
<evidence type="ECO:0000255" key="1"/>
<evidence type="ECO:0000256" key="2">
    <source>
        <dbReference type="SAM" id="MobiDB-lite"/>
    </source>
</evidence>
<evidence type="ECO:0000305" key="3"/>
<comment type="similarity">
    <text evidence="3">Belongs to the OSBP family.</text>
</comment>
<sequence length="422" mass="47374">MEADPSLVSYADQHGEWETREISIFGVVKSFISQLSIGQELTKVSMPSIFLMPYSILELAASRHLKYIHLLISAQHEEDPLKRMAIIIQYFFSCVRDGNFQKKPYNALLGEVHKCFVKYPSYDGQSTSTAQFIGEQVTHHPPLTAFNITTSEGITLDCNVQFSAKFHMNSVSVVTTGAVKICIPVKVGNQIIKETYIIDKGLPDALVKNVIFGTRSIYWTDSVDIMCEDSKTSATVHFDKNEYVKGEVSVYNTELEVEEHRASLKGYISDVVNIDYLESKSSEAAPASSASKKEKKKEKKKAKHSKHTCSPSDTILMDTKQLEPNSTLYPKQTDPITSLGTWKEVTKQIVAGDMQAADQIKKEIEDEQRKRLQITKEEEKKERAYFKYNDDKEIWEFKSTQTLAPVSNSTSSTASDAASGSN</sequence>
<protein>
    <recommendedName>
        <fullName>Oxysterol-binding protein 7</fullName>
    </recommendedName>
    <alternativeName>
        <fullName>OSBPg</fullName>
    </alternativeName>
</protein>
<gene>
    <name type="primary">osbG</name>
    <name type="ORF">DDB_G0283035</name>
</gene>
<organism>
    <name type="scientific">Dictyostelium discoideum</name>
    <name type="common">Social amoeba</name>
    <dbReference type="NCBI Taxonomy" id="44689"/>
    <lineage>
        <taxon>Eukaryota</taxon>
        <taxon>Amoebozoa</taxon>
        <taxon>Evosea</taxon>
        <taxon>Eumycetozoa</taxon>
        <taxon>Dictyostelia</taxon>
        <taxon>Dictyosteliales</taxon>
        <taxon>Dictyosteliaceae</taxon>
        <taxon>Dictyostelium</taxon>
    </lineage>
</organism>